<gene>
    <name evidence="1" type="primary">rbfA</name>
    <name type="ordered locus">Lferr_0556</name>
</gene>
<protein>
    <recommendedName>
        <fullName evidence="1">Ribosome-binding factor A</fullName>
    </recommendedName>
</protein>
<organism>
    <name type="scientific">Acidithiobacillus ferrooxidans (strain ATCC 53993 / BNL-5-31)</name>
    <name type="common">Leptospirillum ferrooxidans (ATCC 53993)</name>
    <dbReference type="NCBI Taxonomy" id="380394"/>
    <lineage>
        <taxon>Bacteria</taxon>
        <taxon>Pseudomonadati</taxon>
        <taxon>Pseudomonadota</taxon>
        <taxon>Acidithiobacillia</taxon>
        <taxon>Acidithiobacillales</taxon>
        <taxon>Acidithiobacillaceae</taxon>
        <taxon>Acidithiobacillus</taxon>
    </lineage>
</organism>
<evidence type="ECO:0000255" key="1">
    <source>
        <dbReference type="HAMAP-Rule" id="MF_00003"/>
    </source>
</evidence>
<keyword id="KW-0963">Cytoplasm</keyword>
<keyword id="KW-0690">Ribosome biogenesis</keyword>
<name>RBFA_ACIF5</name>
<comment type="function">
    <text evidence="1">One of several proteins that assist in the late maturation steps of the functional core of the 30S ribosomal subunit. Associates with free 30S ribosomal subunits (but not with 30S subunits that are part of 70S ribosomes or polysomes). Required for efficient processing of 16S rRNA. May interact with the 5'-terminal helix region of 16S rRNA.</text>
</comment>
<comment type="subunit">
    <text evidence="1">Monomer. Binds 30S ribosomal subunits, but not 50S ribosomal subunits or 70S ribosomes.</text>
</comment>
<comment type="subcellular location">
    <subcellularLocation>
        <location evidence="1">Cytoplasm</location>
    </subcellularLocation>
</comment>
<comment type="similarity">
    <text evidence="1">Belongs to the RbfA family.</text>
</comment>
<accession>B5EMD1</accession>
<dbReference type="EMBL" id="CP001132">
    <property type="protein sequence ID" value="ACH82810.1"/>
    <property type="molecule type" value="Genomic_DNA"/>
</dbReference>
<dbReference type="RefSeq" id="WP_012536118.1">
    <property type="nucleotide sequence ID" value="NC_011206.1"/>
</dbReference>
<dbReference type="SMR" id="B5EMD1"/>
<dbReference type="KEGG" id="afe:Lferr_0556"/>
<dbReference type="eggNOG" id="COG0858">
    <property type="taxonomic scope" value="Bacteria"/>
</dbReference>
<dbReference type="HOGENOM" id="CLU_089475_5_1_6"/>
<dbReference type="GO" id="GO:0005829">
    <property type="term" value="C:cytosol"/>
    <property type="evidence" value="ECO:0007669"/>
    <property type="project" value="TreeGrafter"/>
</dbReference>
<dbReference type="GO" id="GO:0043024">
    <property type="term" value="F:ribosomal small subunit binding"/>
    <property type="evidence" value="ECO:0007669"/>
    <property type="project" value="TreeGrafter"/>
</dbReference>
<dbReference type="GO" id="GO:0030490">
    <property type="term" value="P:maturation of SSU-rRNA"/>
    <property type="evidence" value="ECO:0007669"/>
    <property type="project" value="UniProtKB-UniRule"/>
</dbReference>
<dbReference type="Gene3D" id="3.30.300.20">
    <property type="match status" value="1"/>
</dbReference>
<dbReference type="HAMAP" id="MF_00003">
    <property type="entry name" value="RbfA"/>
    <property type="match status" value="1"/>
</dbReference>
<dbReference type="InterPro" id="IPR015946">
    <property type="entry name" value="KH_dom-like_a/b"/>
</dbReference>
<dbReference type="InterPro" id="IPR000238">
    <property type="entry name" value="RbfA"/>
</dbReference>
<dbReference type="InterPro" id="IPR023799">
    <property type="entry name" value="RbfA_dom_sf"/>
</dbReference>
<dbReference type="InterPro" id="IPR020053">
    <property type="entry name" value="Ribosome-bd_factorA_CS"/>
</dbReference>
<dbReference type="PANTHER" id="PTHR33515">
    <property type="entry name" value="RIBOSOME-BINDING FACTOR A, CHLOROPLASTIC-RELATED"/>
    <property type="match status" value="1"/>
</dbReference>
<dbReference type="PANTHER" id="PTHR33515:SF1">
    <property type="entry name" value="RIBOSOME-BINDING FACTOR A, CHLOROPLASTIC-RELATED"/>
    <property type="match status" value="1"/>
</dbReference>
<dbReference type="Pfam" id="PF02033">
    <property type="entry name" value="RBFA"/>
    <property type="match status" value="1"/>
</dbReference>
<dbReference type="SUPFAM" id="SSF89919">
    <property type="entry name" value="Ribosome-binding factor A, RbfA"/>
    <property type="match status" value="1"/>
</dbReference>
<dbReference type="PROSITE" id="PS01319">
    <property type="entry name" value="RBFA"/>
    <property type="match status" value="1"/>
</dbReference>
<reference key="1">
    <citation type="submission" date="2008-08" db="EMBL/GenBank/DDBJ databases">
        <title>Complete sequence of Acidithiobacillus ferrooxidans ATCC 53993.</title>
        <authorList>
            <person name="Lucas S."/>
            <person name="Copeland A."/>
            <person name="Lapidus A."/>
            <person name="Glavina del Rio T."/>
            <person name="Dalin E."/>
            <person name="Tice H."/>
            <person name="Bruce D."/>
            <person name="Goodwin L."/>
            <person name="Pitluck S."/>
            <person name="Sims D."/>
            <person name="Brettin T."/>
            <person name="Detter J.C."/>
            <person name="Han C."/>
            <person name="Kuske C.R."/>
            <person name="Larimer F."/>
            <person name="Land M."/>
            <person name="Hauser L."/>
            <person name="Kyrpides N."/>
            <person name="Lykidis A."/>
            <person name="Borole A.P."/>
        </authorList>
    </citation>
    <scope>NUCLEOTIDE SEQUENCE [LARGE SCALE GENOMIC DNA]</scope>
    <source>
        <strain>ATCC 53993 / BNL-5-31</strain>
    </source>
</reference>
<feature type="chain" id="PRO_1000193217" description="Ribosome-binding factor A">
    <location>
        <begin position="1"/>
        <end position="128"/>
    </location>
</feature>
<proteinExistence type="inferred from homology"/>
<sequence>MLHSSHRPYPRGARVAHLLREEIAAVLPRLHGMSSGLSPLPPSITMVDLPTDMRSATVYFSLMDGPDRADTIREVLQDHAGEIRQLLGRRLALRRIPPLHFVYDARFDRGAEMAELLAHLPPAPEDLP</sequence>